<sequence length="496" mass="54782">MFNTGTPDSENTYDAILVGAGIMSSTLAVLLHELEPDLRLLVVEKLSSAGLESSCAKNNAGTGHAANCELNYTPIQEDGHLSTTKAFEINKSFEQSLEFWASLAEKGKLIPKTFLNKLPHISLVFGDEDISLLKKRFSKLSSHAAFAKMEFTMDHGELQDWIPLIMDGRKQSEKIAATRIKRGTDIDFGNLTRSYINQIEGAKSIDINYSTNVENLQQDSEGDWYLSLEGAKKNRIVRSKFVFLGAGGGALSLLQKSRIPEGLLYAGFPVSGKWLICDEEKSTKTHNAKVYGKAAVGAPPMSVPHLDTRWIDKKKSLLFGPFAGFSSNFLKYGSKLDLFRSIKTTNLFSMLQAGLDNIDLGKYLLNQLIQTNEDRIDTLKRFLPQVSPNDWKLSTAGQRVQIIKQTSKGGVLKMGTEVVTSSDGSLAALLGASPGASTAVTIMIEVLNRCWQEKMKSSKWKNKMLELFPSIGTDINSDQEALLAIRKRNDFLLKLI</sequence>
<protein>
    <recommendedName>
        <fullName evidence="1">Probable malate:quinone oxidoreductase</fullName>
        <ecNumber evidence="1">1.1.5.4</ecNumber>
    </recommendedName>
    <alternativeName>
        <fullName evidence="1">MQO</fullName>
    </alternativeName>
    <alternativeName>
        <fullName evidence="1">Malate dehydrogenase [quinone]</fullName>
    </alternativeName>
</protein>
<organism>
    <name type="scientific">Prochlorococcus marinus (strain NATL2A)</name>
    <dbReference type="NCBI Taxonomy" id="59920"/>
    <lineage>
        <taxon>Bacteria</taxon>
        <taxon>Bacillati</taxon>
        <taxon>Cyanobacteriota</taxon>
        <taxon>Cyanophyceae</taxon>
        <taxon>Synechococcales</taxon>
        <taxon>Prochlorococcaceae</taxon>
        <taxon>Prochlorococcus</taxon>
    </lineage>
</organism>
<proteinExistence type="inferred from homology"/>
<feature type="chain" id="PRO_0000325510" description="Probable malate:quinone oxidoreductase">
    <location>
        <begin position="1"/>
        <end position="496"/>
    </location>
</feature>
<gene>
    <name evidence="1" type="primary">mqo</name>
    <name type="ordered locus">PMN2A_1753</name>
</gene>
<evidence type="ECO:0000255" key="1">
    <source>
        <dbReference type="HAMAP-Rule" id="MF_00212"/>
    </source>
</evidence>
<evidence type="ECO:0000305" key="2"/>
<reference key="1">
    <citation type="journal article" date="2007" name="PLoS Genet.">
        <title>Patterns and implications of gene gain and loss in the evolution of Prochlorococcus.</title>
        <authorList>
            <person name="Kettler G.C."/>
            <person name="Martiny A.C."/>
            <person name="Huang K."/>
            <person name="Zucker J."/>
            <person name="Coleman M.L."/>
            <person name="Rodrigue S."/>
            <person name="Chen F."/>
            <person name="Lapidus A."/>
            <person name="Ferriera S."/>
            <person name="Johnson J."/>
            <person name="Steglich C."/>
            <person name="Church G.M."/>
            <person name="Richardson P."/>
            <person name="Chisholm S.W."/>
        </authorList>
    </citation>
    <scope>NUCLEOTIDE SEQUENCE [LARGE SCALE GENOMIC DNA]</scope>
    <source>
        <strain>NATL2A</strain>
    </source>
</reference>
<accession>Q46GZ7</accession>
<comment type="catalytic activity">
    <reaction evidence="1">
        <text>(S)-malate + a quinone = a quinol + oxaloacetate</text>
        <dbReference type="Rhea" id="RHEA:46012"/>
        <dbReference type="ChEBI" id="CHEBI:15589"/>
        <dbReference type="ChEBI" id="CHEBI:16452"/>
        <dbReference type="ChEBI" id="CHEBI:24646"/>
        <dbReference type="ChEBI" id="CHEBI:132124"/>
        <dbReference type="EC" id="1.1.5.4"/>
    </reaction>
</comment>
<comment type="cofactor">
    <cofactor evidence="1">
        <name>FAD</name>
        <dbReference type="ChEBI" id="CHEBI:57692"/>
    </cofactor>
</comment>
<comment type="pathway">
    <text evidence="1">Carbohydrate metabolism; tricarboxylic acid cycle; oxaloacetate from (S)-malate (quinone route): step 1/1.</text>
</comment>
<comment type="similarity">
    <text evidence="1">Belongs to the MQO family.</text>
</comment>
<comment type="sequence caution" evidence="2">
    <conflict type="erroneous initiation">
        <sequence resource="EMBL-CDS" id="AAZ59241"/>
    </conflict>
</comment>
<keyword id="KW-0274">FAD</keyword>
<keyword id="KW-0285">Flavoprotein</keyword>
<keyword id="KW-0560">Oxidoreductase</keyword>
<keyword id="KW-1185">Reference proteome</keyword>
<keyword id="KW-0816">Tricarboxylic acid cycle</keyword>
<dbReference type="EC" id="1.1.5.4" evidence="1"/>
<dbReference type="EMBL" id="CP000095">
    <property type="protein sequence ID" value="AAZ59241.1"/>
    <property type="status" value="ALT_INIT"/>
    <property type="molecule type" value="Genomic_DNA"/>
</dbReference>
<dbReference type="RefSeq" id="WP_041710934.1">
    <property type="nucleotide sequence ID" value="NC_007335.2"/>
</dbReference>
<dbReference type="SMR" id="Q46GZ7"/>
<dbReference type="STRING" id="59920.PMN2A_1753"/>
<dbReference type="KEGG" id="pmn:PMN2A_1753"/>
<dbReference type="HOGENOM" id="CLU_028151_0_0_3"/>
<dbReference type="OrthoDB" id="9763983at2"/>
<dbReference type="PhylomeDB" id="Q46GZ7"/>
<dbReference type="UniPathway" id="UPA00223">
    <property type="reaction ID" value="UER01008"/>
</dbReference>
<dbReference type="Proteomes" id="UP000002535">
    <property type="component" value="Chromosome"/>
</dbReference>
<dbReference type="GO" id="GO:0047545">
    <property type="term" value="F:2-hydroxyglutarate dehydrogenase activity"/>
    <property type="evidence" value="ECO:0007669"/>
    <property type="project" value="TreeGrafter"/>
</dbReference>
<dbReference type="GO" id="GO:0008924">
    <property type="term" value="F:L-malate dehydrogenase (quinone) activity"/>
    <property type="evidence" value="ECO:0007669"/>
    <property type="project" value="UniProtKB-UniRule"/>
</dbReference>
<dbReference type="GO" id="GO:0006099">
    <property type="term" value="P:tricarboxylic acid cycle"/>
    <property type="evidence" value="ECO:0007669"/>
    <property type="project" value="UniProtKB-UniRule"/>
</dbReference>
<dbReference type="Gene3D" id="3.50.50.60">
    <property type="entry name" value="FAD/NAD(P)-binding domain"/>
    <property type="match status" value="1"/>
</dbReference>
<dbReference type="HAMAP" id="MF_00212">
    <property type="entry name" value="MQO"/>
    <property type="match status" value="1"/>
</dbReference>
<dbReference type="InterPro" id="IPR036188">
    <property type="entry name" value="FAD/NAD-bd_sf"/>
</dbReference>
<dbReference type="InterPro" id="IPR006231">
    <property type="entry name" value="MQO"/>
</dbReference>
<dbReference type="NCBIfam" id="TIGR01320">
    <property type="entry name" value="mal_quin_oxido"/>
    <property type="match status" value="1"/>
</dbReference>
<dbReference type="NCBIfam" id="NF003606">
    <property type="entry name" value="PRK05257.2-1"/>
    <property type="match status" value="1"/>
</dbReference>
<dbReference type="NCBIfam" id="NF003607">
    <property type="entry name" value="PRK05257.2-3"/>
    <property type="match status" value="1"/>
</dbReference>
<dbReference type="NCBIfam" id="NF003611">
    <property type="entry name" value="PRK05257.3-2"/>
    <property type="match status" value="1"/>
</dbReference>
<dbReference type="NCBIfam" id="NF009875">
    <property type="entry name" value="PRK13339.1"/>
    <property type="match status" value="1"/>
</dbReference>
<dbReference type="PANTHER" id="PTHR43104">
    <property type="entry name" value="L-2-HYDROXYGLUTARATE DEHYDROGENASE, MITOCHONDRIAL"/>
    <property type="match status" value="1"/>
</dbReference>
<dbReference type="PANTHER" id="PTHR43104:SF2">
    <property type="entry name" value="L-2-HYDROXYGLUTARATE DEHYDROGENASE, MITOCHONDRIAL"/>
    <property type="match status" value="1"/>
</dbReference>
<dbReference type="Pfam" id="PF06039">
    <property type="entry name" value="Mqo"/>
    <property type="match status" value="1"/>
</dbReference>
<dbReference type="SUPFAM" id="SSF51905">
    <property type="entry name" value="FAD/NAD(P)-binding domain"/>
    <property type="match status" value="1"/>
</dbReference>
<name>MQO_PROMT</name>